<gene>
    <name evidence="1" type="primary">caiB</name>
    <name type="ordered locus">ECED1_0037</name>
</gene>
<evidence type="ECO:0000255" key="1">
    <source>
        <dbReference type="HAMAP-Rule" id="MF_01050"/>
    </source>
</evidence>
<keyword id="KW-0963">Cytoplasm</keyword>
<keyword id="KW-0808">Transferase</keyword>
<feature type="chain" id="PRO_1000149624" description="L-carnitine CoA-transferase">
    <location>
        <begin position="1"/>
        <end position="405"/>
    </location>
</feature>
<feature type="active site" description="Nucleophile" evidence="1">
    <location>
        <position position="169"/>
    </location>
</feature>
<feature type="binding site" evidence="1">
    <location>
        <position position="97"/>
    </location>
    <ligand>
        <name>CoA</name>
        <dbReference type="ChEBI" id="CHEBI:57287"/>
    </ligand>
</feature>
<feature type="binding site" evidence="1">
    <location>
        <position position="104"/>
    </location>
    <ligand>
        <name>CoA</name>
        <dbReference type="ChEBI" id="CHEBI:57287"/>
    </ligand>
</feature>
<organism>
    <name type="scientific">Escherichia coli O81 (strain ED1a)</name>
    <dbReference type="NCBI Taxonomy" id="585397"/>
    <lineage>
        <taxon>Bacteria</taxon>
        <taxon>Pseudomonadati</taxon>
        <taxon>Pseudomonadota</taxon>
        <taxon>Gammaproteobacteria</taxon>
        <taxon>Enterobacterales</taxon>
        <taxon>Enterobacteriaceae</taxon>
        <taxon>Escherichia</taxon>
    </lineage>
</organism>
<dbReference type="EC" id="2.8.3.21" evidence="1"/>
<dbReference type="EMBL" id="CU928162">
    <property type="protein sequence ID" value="CAR06260.1"/>
    <property type="molecule type" value="Genomic_DNA"/>
</dbReference>
<dbReference type="RefSeq" id="WP_000349942.1">
    <property type="nucleotide sequence ID" value="NC_011745.1"/>
</dbReference>
<dbReference type="SMR" id="B7MNP5"/>
<dbReference type="KEGG" id="ecq:ECED1_0037"/>
<dbReference type="HOGENOM" id="CLU_033975_2_0_6"/>
<dbReference type="UniPathway" id="UPA00117"/>
<dbReference type="Proteomes" id="UP000000748">
    <property type="component" value="Chromosome"/>
</dbReference>
<dbReference type="GO" id="GO:0005737">
    <property type="term" value="C:cytoplasm"/>
    <property type="evidence" value="ECO:0007669"/>
    <property type="project" value="UniProtKB-SubCell"/>
</dbReference>
<dbReference type="GO" id="GO:0008735">
    <property type="term" value="F:L-carnitine CoA-transferase activity"/>
    <property type="evidence" value="ECO:0007669"/>
    <property type="project" value="RHEA"/>
</dbReference>
<dbReference type="GO" id="GO:0009437">
    <property type="term" value="P:carnitine metabolic process"/>
    <property type="evidence" value="ECO:0007669"/>
    <property type="project" value="UniProtKB-UniRule"/>
</dbReference>
<dbReference type="FunFam" id="3.30.1540.10:FF:000001">
    <property type="entry name" value="L-carnitine CoA-transferase"/>
    <property type="match status" value="1"/>
</dbReference>
<dbReference type="Gene3D" id="3.40.50.10540">
    <property type="entry name" value="Crotonobetainyl-coa:carnitine coa-transferase, domain 1"/>
    <property type="match status" value="1"/>
</dbReference>
<dbReference type="Gene3D" id="3.30.1540.10">
    <property type="entry name" value="formyl-coa transferase, domain 3"/>
    <property type="match status" value="1"/>
</dbReference>
<dbReference type="HAMAP" id="MF_01050">
    <property type="entry name" value="CaiB"/>
    <property type="match status" value="1"/>
</dbReference>
<dbReference type="InterPro" id="IPR050509">
    <property type="entry name" value="CoA-transferase_III"/>
</dbReference>
<dbReference type="InterPro" id="IPR023452">
    <property type="entry name" value="CoA-Trfase_CaiB"/>
</dbReference>
<dbReference type="InterPro" id="IPR003673">
    <property type="entry name" value="CoA-Trfase_fam_III"/>
</dbReference>
<dbReference type="InterPro" id="IPR044855">
    <property type="entry name" value="CoA-Trfase_III_dom3_sf"/>
</dbReference>
<dbReference type="InterPro" id="IPR023606">
    <property type="entry name" value="CoA-Trfase_III_dom_1_sf"/>
</dbReference>
<dbReference type="NCBIfam" id="NF002914">
    <property type="entry name" value="PRK03525.1"/>
    <property type="match status" value="1"/>
</dbReference>
<dbReference type="PANTHER" id="PTHR48228:SF6">
    <property type="entry name" value="L-CARNITINE COA-TRANSFERASE"/>
    <property type="match status" value="1"/>
</dbReference>
<dbReference type="PANTHER" id="PTHR48228">
    <property type="entry name" value="SUCCINYL-COA--D-CITRAMALATE COA-TRANSFERASE"/>
    <property type="match status" value="1"/>
</dbReference>
<dbReference type="Pfam" id="PF02515">
    <property type="entry name" value="CoA_transf_3"/>
    <property type="match status" value="1"/>
</dbReference>
<dbReference type="SUPFAM" id="SSF89796">
    <property type="entry name" value="CoA-transferase family III (CaiB/BaiF)"/>
    <property type="match status" value="1"/>
</dbReference>
<sequence>MDHLPMPKFGPLAGLRVVFSGIEIAGPFAGQMFAEWGAEVIWIENVAWADTIRVQPNYPQLSRRNLHALSLNIFKDEGREAFLKLMETTDIFIEASKGPAFARRGITDEVLWQHNPKLVIAHLSGFGQYGTEEYTNLPAYNTIAQAFSGYLIQNGDVDQPMPAFPYTADYFSGLTATTAALAALHKVRETGKGESIDIAMYEVMLRMGQYFMMDYFNGGEMCPRMTKGKDPYYAGCGLYKCADGYIVMELVGITQIAECFKDIGLAHLLGTPEIPEGTQLIHRIECPYGPLVEEKLDAWLAAHTIAEVKERFAELNIACAKVLTVPELESNPQYVARESITQWQTMDGRTCKGPNIMPKFKNNPGQIWRGMPSHGMDTAAILKNIGYSENDIQELVSKGLAKVED</sequence>
<accession>B7MNP5</accession>
<proteinExistence type="inferred from homology"/>
<comment type="function">
    <text evidence="1">Catalyzes the reversible transfer of the CoA moiety from gamma-butyrobetainyl-CoA to L-carnitine to generate L-carnitinyl-CoA and gamma-butyrobetaine. Is also able to catalyze the reversible transfer of the CoA moiety from gamma-butyrobetainyl-CoA or L-carnitinyl-CoA to crotonobetaine to generate crotonobetainyl-CoA.</text>
</comment>
<comment type="catalytic activity">
    <reaction evidence="1">
        <text>crotonobetainyl-CoA + (R)-carnitine = crotonobetaine + (R)-carnitinyl-CoA</text>
        <dbReference type="Rhea" id="RHEA:28526"/>
        <dbReference type="ChEBI" id="CHEBI:16347"/>
        <dbReference type="ChEBI" id="CHEBI:17237"/>
        <dbReference type="ChEBI" id="CHEBI:60932"/>
        <dbReference type="ChEBI" id="CHEBI:60933"/>
        <dbReference type="EC" id="2.8.3.21"/>
    </reaction>
</comment>
<comment type="catalytic activity">
    <reaction evidence="1">
        <text>4-(trimethylamino)butanoyl-CoA + (R)-carnitine = (R)-carnitinyl-CoA + 4-(trimethylamino)butanoate</text>
        <dbReference type="Rhea" id="RHEA:28418"/>
        <dbReference type="ChEBI" id="CHEBI:16244"/>
        <dbReference type="ChEBI" id="CHEBI:16347"/>
        <dbReference type="ChEBI" id="CHEBI:60932"/>
        <dbReference type="ChEBI" id="CHEBI:61513"/>
        <dbReference type="EC" id="2.8.3.21"/>
    </reaction>
</comment>
<comment type="pathway">
    <text evidence="1">Amine and polyamine metabolism; carnitine metabolism.</text>
</comment>
<comment type="subunit">
    <text evidence="1">Homodimer.</text>
</comment>
<comment type="subcellular location">
    <subcellularLocation>
        <location evidence="1">Cytoplasm</location>
    </subcellularLocation>
</comment>
<comment type="similarity">
    <text evidence="1">Belongs to the CoA-transferase III family. CaiB subfamily.</text>
</comment>
<reference key="1">
    <citation type="journal article" date="2009" name="PLoS Genet.">
        <title>Organised genome dynamics in the Escherichia coli species results in highly diverse adaptive paths.</title>
        <authorList>
            <person name="Touchon M."/>
            <person name="Hoede C."/>
            <person name="Tenaillon O."/>
            <person name="Barbe V."/>
            <person name="Baeriswyl S."/>
            <person name="Bidet P."/>
            <person name="Bingen E."/>
            <person name="Bonacorsi S."/>
            <person name="Bouchier C."/>
            <person name="Bouvet O."/>
            <person name="Calteau A."/>
            <person name="Chiapello H."/>
            <person name="Clermont O."/>
            <person name="Cruveiller S."/>
            <person name="Danchin A."/>
            <person name="Diard M."/>
            <person name="Dossat C."/>
            <person name="Karoui M.E."/>
            <person name="Frapy E."/>
            <person name="Garry L."/>
            <person name="Ghigo J.M."/>
            <person name="Gilles A.M."/>
            <person name="Johnson J."/>
            <person name="Le Bouguenec C."/>
            <person name="Lescat M."/>
            <person name="Mangenot S."/>
            <person name="Martinez-Jehanne V."/>
            <person name="Matic I."/>
            <person name="Nassif X."/>
            <person name="Oztas S."/>
            <person name="Petit M.A."/>
            <person name="Pichon C."/>
            <person name="Rouy Z."/>
            <person name="Ruf C.S."/>
            <person name="Schneider D."/>
            <person name="Tourret J."/>
            <person name="Vacherie B."/>
            <person name="Vallenet D."/>
            <person name="Medigue C."/>
            <person name="Rocha E.P.C."/>
            <person name="Denamur E."/>
        </authorList>
    </citation>
    <scope>NUCLEOTIDE SEQUENCE [LARGE SCALE GENOMIC DNA]</scope>
    <source>
        <strain>ED1a</strain>
    </source>
</reference>
<name>CAIB_ECO81</name>
<protein>
    <recommendedName>
        <fullName evidence="1">L-carnitine CoA-transferase</fullName>
        <ecNumber evidence="1">2.8.3.21</ecNumber>
    </recommendedName>
    <alternativeName>
        <fullName evidence="1">Crotonobetainyl-CoA:carnitine CoA-transferase</fullName>
    </alternativeName>
</protein>